<gene>
    <name evidence="1" type="primary">ureA</name>
    <name type="ordered locus">BQ2027_MB1879</name>
</gene>
<comment type="catalytic activity">
    <reaction evidence="1">
        <text>urea + 2 H2O + H(+) = hydrogencarbonate + 2 NH4(+)</text>
        <dbReference type="Rhea" id="RHEA:20557"/>
        <dbReference type="ChEBI" id="CHEBI:15377"/>
        <dbReference type="ChEBI" id="CHEBI:15378"/>
        <dbReference type="ChEBI" id="CHEBI:16199"/>
        <dbReference type="ChEBI" id="CHEBI:17544"/>
        <dbReference type="ChEBI" id="CHEBI:28938"/>
        <dbReference type="EC" id="3.5.1.5"/>
    </reaction>
</comment>
<comment type="pathway">
    <text evidence="1">Nitrogen metabolism; urea degradation; CO(2) and NH(3) from urea (urease route): step 1/1.</text>
</comment>
<comment type="subunit">
    <text evidence="1">Heterotrimer of UreA (gamma), UreB (beta) and UreC (alpha) subunits. Three heterotrimers associate to form the active enzyme.</text>
</comment>
<comment type="subcellular location">
    <subcellularLocation>
        <location evidence="1">Cytoplasm</location>
    </subcellularLocation>
</comment>
<comment type="similarity">
    <text evidence="1">Belongs to the urease gamma subunit family.</text>
</comment>
<organism>
    <name type="scientific">Mycobacterium bovis (strain ATCC BAA-935 / AF2122/97)</name>
    <dbReference type="NCBI Taxonomy" id="233413"/>
    <lineage>
        <taxon>Bacteria</taxon>
        <taxon>Bacillati</taxon>
        <taxon>Actinomycetota</taxon>
        <taxon>Actinomycetes</taxon>
        <taxon>Mycobacteriales</taxon>
        <taxon>Mycobacteriaceae</taxon>
        <taxon>Mycobacterium</taxon>
        <taxon>Mycobacterium tuberculosis complex</taxon>
    </lineage>
</organism>
<dbReference type="EC" id="3.5.1.5" evidence="1"/>
<dbReference type="EMBL" id="LT708304">
    <property type="protein sequence ID" value="SIU00483.1"/>
    <property type="molecule type" value="Genomic_DNA"/>
</dbReference>
<dbReference type="RefSeq" id="NP_855531.1">
    <property type="nucleotide sequence ID" value="NC_002945.3"/>
</dbReference>
<dbReference type="RefSeq" id="WP_003409305.1">
    <property type="nucleotide sequence ID" value="NC_002945.4"/>
</dbReference>
<dbReference type="SMR" id="P0A677"/>
<dbReference type="KEGG" id="mbo:BQ2027_MB1879"/>
<dbReference type="PATRIC" id="fig|233413.5.peg.2060"/>
<dbReference type="UniPathway" id="UPA00258">
    <property type="reaction ID" value="UER00370"/>
</dbReference>
<dbReference type="Proteomes" id="UP000001419">
    <property type="component" value="Chromosome"/>
</dbReference>
<dbReference type="GO" id="GO:0005737">
    <property type="term" value="C:cytoplasm"/>
    <property type="evidence" value="ECO:0007669"/>
    <property type="project" value="UniProtKB-SubCell"/>
</dbReference>
<dbReference type="GO" id="GO:0016151">
    <property type="term" value="F:nickel cation binding"/>
    <property type="evidence" value="ECO:0007669"/>
    <property type="project" value="InterPro"/>
</dbReference>
<dbReference type="GO" id="GO:0009039">
    <property type="term" value="F:urease activity"/>
    <property type="evidence" value="ECO:0007669"/>
    <property type="project" value="UniProtKB-UniRule"/>
</dbReference>
<dbReference type="GO" id="GO:0043419">
    <property type="term" value="P:urea catabolic process"/>
    <property type="evidence" value="ECO:0007669"/>
    <property type="project" value="UniProtKB-UniRule"/>
</dbReference>
<dbReference type="CDD" id="cd00390">
    <property type="entry name" value="Urease_gamma"/>
    <property type="match status" value="1"/>
</dbReference>
<dbReference type="FunFam" id="3.30.280.10:FF:000002">
    <property type="entry name" value="Urease subunit gamma"/>
    <property type="match status" value="1"/>
</dbReference>
<dbReference type="Gene3D" id="3.30.280.10">
    <property type="entry name" value="Urease, gamma-like subunit"/>
    <property type="match status" value="1"/>
</dbReference>
<dbReference type="HAMAP" id="MF_00739">
    <property type="entry name" value="Urease_gamma"/>
    <property type="match status" value="1"/>
</dbReference>
<dbReference type="InterPro" id="IPR012010">
    <property type="entry name" value="Urease_gamma"/>
</dbReference>
<dbReference type="InterPro" id="IPR002026">
    <property type="entry name" value="Urease_gamma/gamma-beta_su"/>
</dbReference>
<dbReference type="InterPro" id="IPR036463">
    <property type="entry name" value="Urease_gamma_sf"/>
</dbReference>
<dbReference type="InterPro" id="IPR050069">
    <property type="entry name" value="Urease_subunit"/>
</dbReference>
<dbReference type="NCBIfam" id="NF009712">
    <property type="entry name" value="PRK13241.1"/>
    <property type="match status" value="1"/>
</dbReference>
<dbReference type="NCBIfam" id="TIGR00193">
    <property type="entry name" value="urease_gam"/>
    <property type="match status" value="1"/>
</dbReference>
<dbReference type="PANTHER" id="PTHR33569">
    <property type="entry name" value="UREASE"/>
    <property type="match status" value="1"/>
</dbReference>
<dbReference type="PANTHER" id="PTHR33569:SF1">
    <property type="entry name" value="UREASE"/>
    <property type="match status" value="1"/>
</dbReference>
<dbReference type="Pfam" id="PF00547">
    <property type="entry name" value="Urease_gamma"/>
    <property type="match status" value="1"/>
</dbReference>
<dbReference type="PIRSF" id="PIRSF001223">
    <property type="entry name" value="Urease_gamma"/>
    <property type="match status" value="1"/>
</dbReference>
<dbReference type="SUPFAM" id="SSF54111">
    <property type="entry name" value="Urease, gamma-subunit"/>
    <property type="match status" value="1"/>
</dbReference>
<feature type="chain" id="PRO_0000098020" description="Urease subunit gamma">
    <location>
        <begin position="1"/>
        <end position="100"/>
    </location>
</feature>
<protein>
    <recommendedName>
        <fullName evidence="1">Urease subunit gamma</fullName>
        <ecNumber evidence="1">3.5.1.5</ecNumber>
    </recommendedName>
    <alternativeName>
        <fullName evidence="1">Urea amidohydrolase subunit gamma</fullName>
    </alternativeName>
</protein>
<accession>P0A677</accession>
<accession>A0A1R3XZH0</accession>
<accession>P50043</accession>
<accession>X2BJ86</accession>
<evidence type="ECO:0000255" key="1">
    <source>
        <dbReference type="HAMAP-Rule" id="MF_00739"/>
    </source>
</evidence>
<keyword id="KW-0963">Cytoplasm</keyword>
<keyword id="KW-0378">Hydrolase</keyword>
<keyword id="KW-1185">Reference proteome</keyword>
<reference key="1">
    <citation type="journal article" date="2003" name="Proc. Natl. Acad. Sci. U.S.A.">
        <title>The complete genome sequence of Mycobacterium bovis.</title>
        <authorList>
            <person name="Garnier T."/>
            <person name="Eiglmeier K."/>
            <person name="Camus J.-C."/>
            <person name="Medina N."/>
            <person name="Mansoor H."/>
            <person name="Pryor M."/>
            <person name="Duthoy S."/>
            <person name="Grondin S."/>
            <person name="Lacroix C."/>
            <person name="Monsempe C."/>
            <person name="Simon S."/>
            <person name="Harris B."/>
            <person name="Atkin R."/>
            <person name="Doggett J."/>
            <person name="Mayes R."/>
            <person name="Keating L."/>
            <person name="Wheeler P.R."/>
            <person name="Parkhill J."/>
            <person name="Barrell B.G."/>
            <person name="Cole S.T."/>
            <person name="Gordon S.V."/>
            <person name="Hewinson R.G."/>
        </authorList>
    </citation>
    <scope>NUCLEOTIDE SEQUENCE [LARGE SCALE GENOMIC DNA]</scope>
    <source>
        <strain>ATCC BAA-935 / AF2122/97</strain>
    </source>
</reference>
<reference key="2">
    <citation type="journal article" date="2017" name="Genome Announc.">
        <title>Updated reference genome sequence and annotation of Mycobacterium bovis AF2122/97.</title>
        <authorList>
            <person name="Malone K.M."/>
            <person name="Farrell D."/>
            <person name="Stuber T.P."/>
            <person name="Schubert O.T."/>
            <person name="Aebersold R."/>
            <person name="Robbe-Austerman S."/>
            <person name="Gordon S.V."/>
        </authorList>
    </citation>
    <scope>NUCLEOTIDE SEQUENCE [LARGE SCALE GENOMIC DNA]</scope>
    <scope>GENOME REANNOTATION</scope>
    <source>
        <strain>ATCC BAA-935 / AF2122/97</strain>
    </source>
</reference>
<sequence length="100" mass="11090">MRLTPHEQERLLLSYAAELARRRRARGLRLNHPEAIAVIADHILEGARDGRTVAELMASGREVLGRDDVMEGVPEMLAEVQVEATFPDGTKLVTVHQPIA</sequence>
<proteinExistence type="inferred from homology"/>
<name>URE3_MYCBO</name>